<comment type="function">
    <text evidence="3">Component of minor spliceosome required for U12-type intron splicing and alternative splicing of many introns. Binds specifically to U12 snRNA, which is necessary for branch-point site recognition. Required for normal plant development.</text>
</comment>
<comment type="subunit">
    <text>Component of the U11/U12 snRNPs that are part of the U12-type spliceosome. Forms a complex with U12 snRNA.</text>
</comment>
<comment type="subcellular location">
    <subcellularLocation>
        <location evidence="3">Nucleus</location>
    </subcellularLocation>
</comment>
<comment type="alternative products">
    <event type="alternative splicing"/>
    <isoform>
        <id>Q8RWV8-1</id>
        <name>1</name>
        <sequence type="displayed"/>
    </isoform>
    <isoform>
        <id>Q8RWV8-2</id>
        <name>2</name>
        <sequence type="described" ref="VSP_055303 VSP_055304"/>
    </isoform>
</comment>
<comment type="tissue specificity">
    <text evidence="3">Ubiquitous.</text>
</comment>
<comment type="disruption phenotype">
    <text evidence="3">Lethal when homozygous.</text>
</comment>
<comment type="sequence caution" evidence="5">
    <conflict type="erroneous gene model prediction">
        <sequence resource="EMBL-CDS" id="AAC24093"/>
    </conflict>
</comment>
<protein>
    <recommendedName>
        <fullName>U11/U12 small nuclear ribonucleoprotein 65 kDa protein</fullName>
        <shortName>U11/U12 snRNP 65 kDa protein</shortName>
        <shortName>U11/U12-65K</shortName>
    </recommendedName>
</protein>
<dbReference type="EMBL" id="AC003114">
    <property type="protein sequence ID" value="AAC24093.1"/>
    <property type="status" value="ALT_SEQ"/>
    <property type="molecule type" value="Genomic_DNA"/>
</dbReference>
<dbReference type="EMBL" id="CP002684">
    <property type="protein sequence ID" value="AEE28416.1"/>
    <property type="molecule type" value="Genomic_DNA"/>
</dbReference>
<dbReference type="EMBL" id="AY091076">
    <property type="protein sequence ID" value="AAM13896.1"/>
    <property type="molecule type" value="mRNA"/>
</dbReference>
<dbReference type="EMBL" id="AY122947">
    <property type="protein sequence ID" value="AAM67480.1"/>
    <property type="molecule type" value="mRNA"/>
</dbReference>
<dbReference type="EMBL" id="AK318900">
    <property type="protein sequence ID" value="BAH57015.1"/>
    <property type="molecule type" value="mRNA"/>
</dbReference>
<dbReference type="PIR" id="B86225">
    <property type="entry name" value="B86225"/>
</dbReference>
<dbReference type="RefSeq" id="NP_172394.1">
    <molecule id="Q8RWV8-1"/>
    <property type="nucleotide sequence ID" value="NM_100793.4"/>
</dbReference>
<dbReference type="SMR" id="Q8RWV8"/>
<dbReference type="BioGRID" id="22684">
    <property type="interactions" value="1"/>
</dbReference>
<dbReference type="FunCoup" id="Q8RWV8">
    <property type="interactions" value="1598"/>
</dbReference>
<dbReference type="IntAct" id="Q8RWV8">
    <property type="interactions" value="1"/>
</dbReference>
<dbReference type="STRING" id="3702.Q8RWV8"/>
<dbReference type="iPTMnet" id="Q8RWV8"/>
<dbReference type="PaxDb" id="3702-AT1G09230.1"/>
<dbReference type="EnsemblPlants" id="AT1G09230.1">
    <molecule id="Q8RWV8-1"/>
    <property type="protein sequence ID" value="AT1G09230.1"/>
    <property type="gene ID" value="AT1G09230"/>
</dbReference>
<dbReference type="GeneID" id="837443"/>
<dbReference type="Gramene" id="AT1G09230.1">
    <molecule id="Q8RWV8-1"/>
    <property type="protein sequence ID" value="AT1G09230.1"/>
    <property type="gene ID" value="AT1G09230"/>
</dbReference>
<dbReference type="KEGG" id="ath:AT1G09230"/>
<dbReference type="Araport" id="AT1G09230"/>
<dbReference type="TAIR" id="AT1G09230">
    <property type="gene designation" value="U11/U12-65K"/>
</dbReference>
<dbReference type="eggNOG" id="KOG4206">
    <property type="taxonomic scope" value="Eukaryota"/>
</dbReference>
<dbReference type="HOGENOM" id="CLU_039888_2_1_1"/>
<dbReference type="InParanoid" id="Q8RWV8"/>
<dbReference type="OMA" id="AINIRHE"/>
<dbReference type="OrthoDB" id="277802at2759"/>
<dbReference type="PhylomeDB" id="Q8RWV8"/>
<dbReference type="PRO" id="PR:Q8RWV8"/>
<dbReference type="Proteomes" id="UP000006548">
    <property type="component" value="Chromosome 1"/>
</dbReference>
<dbReference type="ExpressionAtlas" id="Q8RWV8">
    <property type="expression patterns" value="baseline and differential"/>
</dbReference>
<dbReference type="GO" id="GO:0005634">
    <property type="term" value="C:nucleus"/>
    <property type="evidence" value="ECO:0000314"/>
    <property type="project" value="UniProtKB"/>
</dbReference>
<dbReference type="GO" id="GO:0005689">
    <property type="term" value="C:U12-type spliceosomal complex"/>
    <property type="evidence" value="ECO:0000303"/>
    <property type="project" value="UniProtKB"/>
</dbReference>
<dbReference type="GO" id="GO:0097157">
    <property type="term" value="F:pre-mRNA intronic binding"/>
    <property type="evidence" value="ECO:0000314"/>
    <property type="project" value="TAIR"/>
</dbReference>
<dbReference type="GO" id="GO:0030626">
    <property type="term" value="F:U12 snRNA binding"/>
    <property type="evidence" value="ECO:0000314"/>
    <property type="project" value="UniProtKB"/>
</dbReference>
<dbReference type="GO" id="GO:0010229">
    <property type="term" value="P:inflorescence development"/>
    <property type="evidence" value="ECO:0000315"/>
    <property type="project" value="UniProtKB"/>
</dbReference>
<dbReference type="GO" id="GO:0000398">
    <property type="term" value="P:mRNA splicing, via spliceosome"/>
    <property type="evidence" value="ECO:0000314"/>
    <property type="project" value="UniProtKB"/>
</dbReference>
<dbReference type="CDD" id="cd12238">
    <property type="entry name" value="RRM1_RBM40_like"/>
    <property type="match status" value="1"/>
</dbReference>
<dbReference type="CDD" id="cd12239">
    <property type="entry name" value="RRM2_RBM40_like"/>
    <property type="match status" value="1"/>
</dbReference>
<dbReference type="FunFam" id="3.30.70.330:FF:000409">
    <property type="entry name" value="U11/U12 small nuclear ribonucleoprotein 65 kDa protein"/>
    <property type="match status" value="1"/>
</dbReference>
<dbReference type="FunFam" id="3.30.70.330:FF:000559">
    <property type="entry name" value="U11/U12 small nuclear ribonucleoprotein 65 kDa protein"/>
    <property type="match status" value="1"/>
</dbReference>
<dbReference type="Gene3D" id="3.30.70.330">
    <property type="match status" value="2"/>
</dbReference>
<dbReference type="InterPro" id="IPR012677">
    <property type="entry name" value="Nucleotide-bd_a/b_plait_sf"/>
</dbReference>
<dbReference type="InterPro" id="IPR035979">
    <property type="entry name" value="RBD_domain_sf"/>
</dbReference>
<dbReference type="InterPro" id="IPR034147">
    <property type="entry name" value="RBM40_RRM1"/>
</dbReference>
<dbReference type="InterPro" id="IPR045164">
    <property type="entry name" value="RBM41/RNPC3"/>
</dbReference>
<dbReference type="InterPro" id="IPR000504">
    <property type="entry name" value="RRM_dom"/>
</dbReference>
<dbReference type="PANTHER" id="PTHR16105">
    <property type="entry name" value="RNA-BINDING REGION-CONTAINING PROTEIN 3"/>
    <property type="match status" value="1"/>
</dbReference>
<dbReference type="PANTHER" id="PTHR16105:SF0">
    <property type="entry name" value="RNA-BINDING REGION-CONTAINING PROTEIN 3"/>
    <property type="match status" value="1"/>
</dbReference>
<dbReference type="Pfam" id="PF00076">
    <property type="entry name" value="RRM_1"/>
    <property type="match status" value="2"/>
</dbReference>
<dbReference type="SMART" id="SM00360">
    <property type="entry name" value="RRM"/>
    <property type="match status" value="2"/>
</dbReference>
<dbReference type="SUPFAM" id="SSF54928">
    <property type="entry name" value="RNA-binding domain, RBD"/>
    <property type="match status" value="1"/>
</dbReference>
<dbReference type="PROSITE" id="PS50102">
    <property type="entry name" value="RRM"/>
    <property type="match status" value="2"/>
</dbReference>
<sequence>MAAHATSEPAVNLPATQFESQVTEPFGVTLLVRHLPDGIPHDIVSRLFSQYGASAVRPCSGGKLRNAAFVDFKNEAFASQAHRQLNGLRFLGKVLQVQRANKPNDNKKSRQIEESVTKGNAFSTVSTNNDSKSGQILSGEPIAPKLGIDYPFPPHLQYAYPPPDANILANITNALIAVPPLYTQVLHLMNKMNLPPPFRLALPTPPLPKAGPQQTDLEHQSSSESEMESDEDIGTSKSGRKRARHGFLVGLGMDKDVPHETVGVKPSSLTPKEIPRIRKNKHVMQIKITSKVTQDEYKEESENEDPADEPKEKDSNLKPFASLEELEKGRLPPQDILSLPMFKNYTAGNPSVVLYIKNLAKDVVIDDFYYIFGSQFESSEVAKSSLGVRLMQEGRMRGQAFLTFPSVEVAHRALNLVNGFVFKGKPMIIQFGRTPGAAKPNE</sequence>
<evidence type="ECO:0000255" key="1">
    <source>
        <dbReference type="PROSITE-ProRule" id="PRU00176"/>
    </source>
</evidence>
<evidence type="ECO:0000256" key="2">
    <source>
        <dbReference type="SAM" id="MobiDB-lite"/>
    </source>
</evidence>
<evidence type="ECO:0000269" key="3">
    <source>
    </source>
</evidence>
<evidence type="ECO:0000303" key="4">
    <source>
    </source>
</evidence>
<evidence type="ECO:0000305" key="5"/>
<reference key="1">
    <citation type="journal article" date="2000" name="Nature">
        <title>Sequence and analysis of chromosome 1 of the plant Arabidopsis thaliana.</title>
        <authorList>
            <person name="Theologis A."/>
            <person name="Ecker J.R."/>
            <person name="Palm C.J."/>
            <person name="Federspiel N.A."/>
            <person name="Kaul S."/>
            <person name="White O."/>
            <person name="Alonso J."/>
            <person name="Altafi H."/>
            <person name="Araujo R."/>
            <person name="Bowman C.L."/>
            <person name="Brooks S.Y."/>
            <person name="Buehler E."/>
            <person name="Chan A."/>
            <person name="Chao Q."/>
            <person name="Chen H."/>
            <person name="Cheuk R.F."/>
            <person name="Chin C.W."/>
            <person name="Chung M.K."/>
            <person name="Conn L."/>
            <person name="Conway A.B."/>
            <person name="Conway A.R."/>
            <person name="Creasy T.H."/>
            <person name="Dewar K."/>
            <person name="Dunn P."/>
            <person name="Etgu P."/>
            <person name="Feldblyum T.V."/>
            <person name="Feng J.-D."/>
            <person name="Fong B."/>
            <person name="Fujii C.Y."/>
            <person name="Gill J.E."/>
            <person name="Goldsmith A.D."/>
            <person name="Haas B."/>
            <person name="Hansen N.F."/>
            <person name="Hughes B."/>
            <person name="Huizar L."/>
            <person name="Hunter J.L."/>
            <person name="Jenkins J."/>
            <person name="Johnson-Hopson C."/>
            <person name="Khan S."/>
            <person name="Khaykin E."/>
            <person name="Kim C.J."/>
            <person name="Koo H.L."/>
            <person name="Kremenetskaia I."/>
            <person name="Kurtz D.B."/>
            <person name="Kwan A."/>
            <person name="Lam B."/>
            <person name="Langin-Hooper S."/>
            <person name="Lee A."/>
            <person name="Lee J.M."/>
            <person name="Lenz C.A."/>
            <person name="Li J.H."/>
            <person name="Li Y.-P."/>
            <person name="Lin X."/>
            <person name="Liu S.X."/>
            <person name="Liu Z.A."/>
            <person name="Luros J.S."/>
            <person name="Maiti R."/>
            <person name="Marziali A."/>
            <person name="Militscher J."/>
            <person name="Miranda M."/>
            <person name="Nguyen M."/>
            <person name="Nierman W.C."/>
            <person name="Osborne B.I."/>
            <person name="Pai G."/>
            <person name="Peterson J."/>
            <person name="Pham P.K."/>
            <person name="Rizzo M."/>
            <person name="Rooney T."/>
            <person name="Rowley D."/>
            <person name="Sakano H."/>
            <person name="Salzberg S.L."/>
            <person name="Schwartz J.R."/>
            <person name="Shinn P."/>
            <person name="Southwick A.M."/>
            <person name="Sun H."/>
            <person name="Tallon L.J."/>
            <person name="Tambunga G."/>
            <person name="Toriumi M.J."/>
            <person name="Town C.D."/>
            <person name="Utterback T."/>
            <person name="Van Aken S."/>
            <person name="Vaysberg M."/>
            <person name="Vysotskaia V.S."/>
            <person name="Walker M."/>
            <person name="Wu D."/>
            <person name="Yu G."/>
            <person name="Fraser C.M."/>
            <person name="Venter J.C."/>
            <person name="Davis R.W."/>
        </authorList>
    </citation>
    <scope>NUCLEOTIDE SEQUENCE [LARGE SCALE GENOMIC DNA]</scope>
    <source>
        <strain>cv. Columbia</strain>
    </source>
</reference>
<reference key="2">
    <citation type="journal article" date="2017" name="Plant J.">
        <title>Araport11: a complete reannotation of the Arabidopsis thaliana reference genome.</title>
        <authorList>
            <person name="Cheng C.Y."/>
            <person name="Krishnakumar V."/>
            <person name="Chan A.P."/>
            <person name="Thibaud-Nissen F."/>
            <person name="Schobel S."/>
            <person name="Town C.D."/>
        </authorList>
    </citation>
    <scope>GENOME REANNOTATION</scope>
    <source>
        <strain>cv. Columbia</strain>
    </source>
</reference>
<reference key="3">
    <citation type="journal article" date="2003" name="Science">
        <title>Empirical analysis of transcriptional activity in the Arabidopsis genome.</title>
        <authorList>
            <person name="Yamada K."/>
            <person name="Lim J."/>
            <person name="Dale J.M."/>
            <person name="Chen H."/>
            <person name="Shinn P."/>
            <person name="Palm C.J."/>
            <person name="Southwick A.M."/>
            <person name="Wu H.C."/>
            <person name="Kim C.J."/>
            <person name="Nguyen M."/>
            <person name="Pham P.K."/>
            <person name="Cheuk R.F."/>
            <person name="Karlin-Newmann G."/>
            <person name="Liu S.X."/>
            <person name="Lam B."/>
            <person name="Sakano H."/>
            <person name="Wu T."/>
            <person name="Yu G."/>
            <person name="Miranda M."/>
            <person name="Quach H.L."/>
            <person name="Tripp M."/>
            <person name="Chang C.H."/>
            <person name="Lee J.M."/>
            <person name="Toriumi M.J."/>
            <person name="Chan M.M."/>
            <person name="Tang C.C."/>
            <person name="Onodera C.S."/>
            <person name="Deng J.M."/>
            <person name="Akiyama K."/>
            <person name="Ansari Y."/>
            <person name="Arakawa T."/>
            <person name="Banh J."/>
            <person name="Banno F."/>
            <person name="Bowser L."/>
            <person name="Brooks S.Y."/>
            <person name="Carninci P."/>
            <person name="Chao Q."/>
            <person name="Choy N."/>
            <person name="Enju A."/>
            <person name="Goldsmith A.D."/>
            <person name="Gurjal M."/>
            <person name="Hansen N.F."/>
            <person name="Hayashizaki Y."/>
            <person name="Johnson-Hopson C."/>
            <person name="Hsuan V.W."/>
            <person name="Iida K."/>
            <person name="Karnes M."/>
            <person name="Khan S."/>
            <person name="Koesema E."/>
            <person name="Ishida J."/>
            <person name="Jiang P.X."/>
            <person name="Jones T."/>
            <person name="Kawai J."/>
            <person name="Kamiya A."/>
            <person name="Meyers C."/>
            <person name="Nakajima M."/>
            <person name="Narusaka M."/>
            <person name="Seki M."/>
            <person name="Sakurai T."/>
            <person name="Satou M."/>
            <person name="Tamse R."/>
            <person name="Vaysberg M."/>
            <person name="Wallender E.K."/>
            <person name="Wong C."/>
            <person name="Yamamura Y."/>
            <person name="Yuan S."/>
            <person name="Shinozaki K."/>
            <person name="Davis R.W."/>
            <person name="Theologis A."/>
            <person name="Ecker J.R."/>
        </authorList>
    </citation>
    <scope>NUCLEOTIDE SEQUENCE [LARGE SCALE MRNA] (ISOFORM 1)</scope>
    <source>
        <strain>cv. Columbia</strain>
    </source>
</reference>
<reference key="4">
    <citation type="journal article" date="2009" name="DNA Res.">
        <title>Analysis of multiple occurrences of alternative splicing events in Arabidopsis thaliana using novel sequenced full-length cDNAs.</title>
        <authorList>
            <person name="Iida K."/>
            <person name="Fukami-Kobayashi K."/>
            <person name="Toyoda A."/>
            <person name="Sakaki Y."/>
            <person name="Kobayashi M."/>
            <person name="Seki M."/>
            <person name="Shinozaki K."/>
        </authorList>
    </citation>
    <scope>NUCLEOTIDE SEQUENCE [LARGE SCALE MRNA] (ISOFORM 2)</scope>
    <source>
        <strain>cv. Columbia</strain>
        <tissue>Rosette leaf</tissue>
    </source>
</reference>
<reference key="5">
    <citation type="journal article" date="2005" name="RNA">
        <title>Evolutionary conservation of minor U12-type spliceosome between plants and humans.</title>
        <authorList>
            <person name="Lorkovic Z.J."/>
            <person name="Lehner R."/>
            <person name="Forstner C."/>
            <person name="Barta A."/>
        </authorList>
    </citation>
    <scope>IDENTIFICATION</scope>
</reference>
<reference key="6">
    <citation type="journal article" date="2014" name="Plant J.">
        <title>The Arabidopsis U11/U12-65K is an indispensible component of minor spliceosome and plays a crucial role in U12 intron splicing and plant development.</title>
        <authorList>
            <person name="Jung H.J."/>
            <person name="Kang H."/>
        </authorList>
    </citation>
    <scope>FUNCTION</scope>
    <scope>TISSUE SPECIFICITY</scope>
    <scope>SUBCELLULAR LOCATION</scope>
    <scope>DISRUPTION PHENOTYPE</scope>
    <scope>RNA-BINDING</scope>
    <source>
        <strain>cv. Columbia</strain>
    </source>
</reference>
<organism>
    <name type="scientific">Arabidopsis thaliana</name>
    <name type="common">Mouse-ear cress</name>
    <dbReference type="NCBI Taxonomy" id="3702"/>
    <lineage>
        <taxon>Eukaryota</taxon>
        <taxon>Viridiplantae</taxon>
        <taxon>Streptophyta</taxon>
        <taxon>Embryophyta</taxon>
        <taxon>Tracheophyta</taxon>
        <taxon>Spermatophyta</taxon>
        <taxon>Magnoliopsida</taxon>
        <taxon>eudicotyledons</taxon>
        <taxon>Gunneridae</taxon>
        <taxon>Pentapetalae</taxon>
        <taxon>rosids</taxon>
        <taxon>malvids</taxon>
        <taxon>Brassicales</taxon>
        <taxon>Brassicaceae</taxon>
        <taxon>Camelineae</taxon>
        <taxon>Arabidopsis</taxon>
    </lineage>
</organism>
<accession>Q8RWV8</accession>
<accession>C0Z2T6</accession>
<accession>O80484</accession>
<keyword id="KW-0025">Alternative splicing</keyword>
<keyword id="KW-0507">mRNA processing</keyword>
<keyword id="KW-0508">mRNA splicing</keyword>
<keyword id="KW-0539">Nucleus</keyword>
<keyword id="KW-1185">Reference proteome</keyword>
<keyword id="KW-0677">Repeat</keyword>
<keyword id="KW-0687">Ribonucleoprotein</keyword>
<keyword id="KW-0694">RNA-binding</keyword>
<keyword id="KW-0747">Spliceosome</keyword>
<name>U1165_ARATH</name>
<feature type="chain" id="PRO_0000429831" description="U11/U12 small nuclear ribonucleoprotein 65 kDa protein">
    <location>
        <begin position="1"/>
        <end position="442"/>
    </location>
</feature>
<feature type="domain" description="RRM 1" evidence="1">
    <location>
        <begin position="28"/>
        <end position="102"/>
    </location>
</feature>
<feature type="domain" description="RRM 2" evidence="1">
    <location>
        <begin position="352"/>
        <end position="434"/>
    </location>
</feature>
<feature type="region of interest" description="Disordered" evidence="2">
    <location>
        <begin position="101"/>
        <end position="138"/>
    </location>
</feature>
<feature type="region of interest" description="Disordered" evidence="2">
    <location>
        <begin position="200"/>
        <end position="242"/>
    </location>
</feature>
<feature type="region of interest" description="Disordered" evidence="2">
    <location>
        <begin position="290"/>
        <end position="317"/>
    </location>
</feature>
<feature type="compositionally biased region" description="Basic and acidic residues" evidence="2">
    <location>
        <begin position="102"/>
        <end position="116"/>
    </location>
</feature>
<feature type="compositionally biased region" description="Polar residues" evidence="2">
    <location>
        <begin position="117"/>
        <end position="136"/>
    </location>
</feature>
<feature type="compositionally biased region" description="Pro residues" evidence="2">
    <location>
        <begin position="200"/>
        <end position="209"/>
    </location>
</feature>
<feature type="compositionally biased region" description="Acidic residues" evidence="2">
    <location>
        <begin position="297"/>
        <end position="307"/>
    </location>
</feature>
<feature type="splice variant" id="VSP_055303" description="In isoform 2." evidence="4">
    <original>GSQ</original>
    <variation>AFM</variation>
    <location>
        <begin position="373"/>
        <end position="375"/>
    </location>
</feature>
<feature type="splice variant" id="VSP_055304" description="In isoform 2." evidence="4">
    <location>
        <begin position="376"/>
        <end position="442"/>
    </location>
</feature>
<gene>
    <name type="primary">SNRNP65</name>
    <name type="ordered locus">At1g09230</name>
    <name type="ORF">T12M4.6</name>
</gene>
<proteinExistence type="evidence at protein level"/>